<reference key="1">
    <citation type="submission" date="2007-03" db="EMBL/GenBank/DDBJ databases">
        <title>Complete sequence of Shewanella loihica PV-4.</title>
        <authorList>
            <consortium name="US DOE Joint Genome Institute"/>
            <person name="Copeland A."/>
            <person name="Lucas S."/>
            <person name="Lapidus A."/>
            <person name="Barry K."/>
            <person name="Detter J.C."/>
            <person name="Glavina del Rio T."/>
            <person name="Hammon N."/>
            <person name="Israni S."/>
            <person name="Dalin E."/>
            <person name="Tice H."/>
            <person name="Pitluck S."/>
            <person name="Chain P."/>
            <person name="Malfatti S."/>
            <person name="Shin M."/>
            <person name="Vergez L."/>
            <person name="Schmutz J."/>
            <person name="Larimer F."/>
            <person name="Land M."/>
            <person name="Hauser L."/>
            <person name="Kyrpides N."/>
            <person name="Mikhailova N."/>
            <person name="Romine M.F."/>
            <person name="Serres G."/>
            <person name="Fredrickson J."/>
            <person name="Tiedje J."/>
            <person name="Richardson P."/>
        </authorList>
    </citation>
    <scope>NUCLEOTIDE SEQUENCE [LARGE SCALE GENOMIC DNA]</scope>
    <source>
        <strain>ATCC BAA-1088 / PV-4</strain>
    </source>
</reference>
<accession>A3Q9C7</accession>
<comment type="function">
    <text evidence="1">Catalyzes the ATP-dependent phosphorylation of N-acetyl-L-glutamate.</text>
</comment>
<comment type="catalytic activity">
    <reaction evidence="1">
        <text>N-acetyl-L-glutamate + ATP = N-acetyl-L-glutamyl 5-phosphate + ADP</text>
        <dbReference type="Rhea" id="RHEA:14629"/>
        <dbReference type="ChEBI" id="CHEBI:30616"/>
        <dbReference type="ChEBI" id="CHEBI:44337"/>
        <dbReference type="ChEBI" id="CHEBI:57936"/>
        <dbReference type="ChEBI" id="CHEBI:456216"/>
        <dbReference type="EC" id="2.7.2.8"/>
    </reaction>
</comment>
<comment type="pathway">
    <text evidence="1">Amino-acid biosynthesis; L-arginine biosynthesis; N(2)-acetyl-L-ornithine from L-glutamate: step 2/4.</text>
</comment>
<comment type="subcellular location">
    <subcellularLocation>
        <location evidence="1">Cytoplasm</location>
    </subcellularLocation>
</comment>
<comment type="similarity">
    <text evidence="1">Belongs to the acetylglutamate kinase family. ArgB subfamily.</text>
</comment>
<sequence length="261" mass="27178">MSANKKTLVLKVGGALMQCEMGLARLMASAANIIKSGQSVILVHGGGCLVDEQLKANGMETVKLDGLRVTPEEQVPIVVGALAGTSNKILQASAIKAGITSVGMSLCDGAIVNGSIKDEQLGFVGEVSPNDPTYLNFLLAQGWMPIVSSIAVDDAGNLLNVNADQAATVIAKLVEGQLVLLSDVSGVLDGKGQLIKTLDKAHADELTKLGVIEKGMKVKVEAALEVAQWMGQPVQVASWRDAEQLSALEKGESIGTQVMPH</sequence>
<name>ARGB_SHELP</name>
<evidence type="ECO:0000255" key="1">
    <source>
        <dbReference type="HAMAP-Rule" id="MF_00082"/>
    </source>
</evidence>
<proteinExistence type="inferred from homology"/>
<organism>
    <name type="scientific">Shewanella loihica (strain ATCC BAA-1088 / PV-4)</name>
    <dbReference type="NCBI Taxonomy" id="323850"/>
    <lineage>
        <taxon>Bacteria</taxon>
        <taxon>Pseudomonadati</taxon>
        <taxon>Pseudomonadota</taxon>
        <taxon>Gammaproteobacteria</taxon>
        <taxon>Alteromonadales</taxon>
        <taxon>Shewanellaceae</taxon>
        <taxon>Shewanella</taxon>
    </lineage>
</organism>
<keyword id="KW-0028">Amino-acid biosynthesis</keyword>
<keyword id="KW-0055">Arginine biosynthesis</keyword>
<keyword id="KW-0067">ATP-binding</keyword>
<keyword id="KW-0963">Cytoplasm</keyword>
<keyword id="KW-0418">Kinase</keyword>
<keyword id="KW-0547">Nucleotide-binding</keyword>
<keyword id="KW-1185">Reference proteome</keyword>
<keyword id="KW-0808">Transferase</keyword>
<protein>
    <recommendedName>
        <fullName evidence="1">Acetylglutamate kinase</fullName>
        <ecNumber evidence="1">2.7.2.8</ecNumber>
    </recommendedName>
    <alternativeName>
        <fullName evidence="1">N-acetyl-L-glutamate 5-phosphotransferase</fullName>
    </alternativeName>
    <alternativeName>
        <fullName evidence="1">NAG kinase</fullName>
        <shortName evidence="1">NAGK</shortName>
    </alternativeName>
</protein>
<gene>
    <name evidence="1" type="primary">argB</name>
    <name type="ordered locus">Shew_0203</name>
</gene>
<dbReference type="EC" id="2.7.2.8" evidence="1"/>
<dbReference type="EMBL" id="CP000606">
    <property type="protein sequence ID" value="ABO22075.1"/>
    <property type="molecule type" value="Genomic_DNA"/>
</dbReference>
<dbReference type="RefSeq" id="WP_011864010.1">
    <property type="nucleotide sequence ID" value="NC_009092.1"/>
</dbReference>
<dbReference type="SMR" id="A3Q9C7"/>
<dbReference type="STRING" id="323850.Shew_0203"/>
<dbReference type="KEGG" id="slo:Shew_0203"/>
<dbReference type="eggNOG" id="COG0548">
    <property type="taxonomic scope" value="Bacteria"/>
</dbReference>
<dbReference type="HOGENOM" id="CLU_053680_1_1_6"/>
<dbReference type="OrthoDB" id="5915023at2"/>
<dbReference type="UniPathway" id="UPA00068">
    <property type="reaction ID" value="UER00107"/>
</dbReference>
<dbReference type="Proteomes" id="UP000001558">
    <property type="component" value="Chromosome"/>
</dbReference>
<dbReference type="GO" id="GO:0005737">
    <property type="term" value="C:cytoplasm"/>
    <property type="evidence" value="ECO:0007669"/>
    <property type="project" value="UniProtKB-SubCell"/>
</dbReference>
<dbReference type="GO" id="GO:0003991">
    <property type="term" value="F:acetylglutamate kinase activity"/>
    <property type="evidence" value="ECO:0007669"/>
    <property type="project" value="UniProtKB-UniRule"/>
</dbReference>
<dbReference type="GO" id="GO:0005524">
    <property type="term" value="F:ATP binding"/>
    <property type="evidence" value="ECO:0007669"/>
    <property type="project" value="UniProtKB-UniRule"/>
</dbReference>
<dbReference type="GO" id="GO:0042450">
    <property type="term" value="P:arginine biosynthetic process via ornithine"/>
    <property type="evidence" value="ECO:0007669"/>
    <property type="project" value="UniProtKB-UniRule"/>
</dbReference>
<dbReference type="GO" id="GO:0006526">
    <property type="term" value="P:L-arginine biosynthetic process"/>
    <property type="evidence" value="ECO:0007669"/>
    <property type="project" value="UniProtKB-UniPathway"/>
</dbReference>
<dbReference type="Gene3D" id="3.40.1160.10">
    <property type="entry name" value="Acetylglutamate kinase-like"/>
    <property type="match status" value="1"/>
</dbReference>
<dbReference type="HAMAP" id="MF_00082">
    <property type="entry name" value="ArgB"/>
    <property type="match status" value="1"/>
</dbReference>
<dbReference type="InterPro" id="IPR036393">
    <property type="entry name" value="AceGlu_kinase-like_sf"/>
</dbReference>
<dbReference type="InterPro" id="IPR004662">
    <property type="entry name" value="AcgluKinase_fam"/>
</dbReference>
<dbReference type="InterPro" id="IPR037528">
    <property type="entry name" value="ArgB"/>
</dbReference>
<dbReference type="InterPro" id="IPR001048">
    <property type="entry name" value="Asp/Glu/Uridylate_kinase"/>
</dbReference>
<dbReference type="NCBIfam" id="TIGR00761">
    <property type="entry name" value="argB"/>
    <property type="match status" value="1"/>
</dbReference>
<dbReference type="PANTHER" id="PTHR23342">
    <property type="entry name" value="N-ACETYLGLUTAMATE SYNTHASE"/>
    <property type="match status" value="1"/>
</dbReference>
<dbReference type="PANTHER" id="PTHR23342:SF0">
    <property type="entry name" value="N-ACETYLGLUTAMATE SYNTHASE, MITOCHONDRIAL"/>
    <property type="match status" value="1"/>
</dbReference>
<dbReference type="Pfam" id="PF00696">
    <property type="entry name" value="AA_kinase"/>
    <property type="match status" value="1"/>
</dbReference>
<dbReference type="PIRSF" id="PIRSF000728">
    <property type="entry name" value="NAGK"/>
    <property type="match status" value="1"/>
</dbReference>
<dbReference type="SUPFAM" id="SSF53633">
    <property type="entry name" value="Carbamate kinase-like"/>
    <property type="match status" value="1"/>
</dbReference>
<feature type="chain" id="PRO_1000117129" description="Acetylglutamate kinase">
    <location>
        <begin position="1"/>
        <end position="261"/>
    </location>
</feature>
<feature type="binding site" evidence="1">
    <location>
        <begin position="46"/>
        <end position="47"/>
    </location>
    <ligand>
        <name>substrate</name>
    </ligand>
</feature>
<feature type="binding site" evidence="1">
    <location>
        <position position="68"/>
    </location>
    <ligand>
        <name>substrate</name>
    </ligand>
</feature>
<feature type="binding site" evidence="1">
    <location>
        <position position="160"/>
    </location>
    <ligand>
        <name>substrate</name>
    </ligand>
</feature>
<feature type="site" description="Transition state stabilizer" evidence="1">
    <location>
        <position position="11"/>
    </location>
</feature>
<feature type="site" description="Transition state stabilizer" evidence="1">
    <location>
        <position position="219"/>
    </location>
</feature>